<evidence type="ECO:0000250" key="1"/>
<evidence type="ECO:0000305" key="2"/>
<feature type="chain" id="PRO_0000405362" description="I-Kappa-B like protein F2">
    <location>
        <begin position="1"/>
        <end position="167"/>
    </location>
</feature>
<feature type="repeat" description="ANK 1">
    <location>
        <begin position="54"/>
        <end position="86"/>
    </location>
</feature>
<feature type="repeat" description="ANK 2">
    <location>
        <begin position="91"/>
        <end position="121"/>
    </location>
</feature>
<feature type="repeat" description="ANK 3">
    <location>
        <begin position="125"/>
        <end position="154"/>
    </location>
</feature>
<name>IKBF2_MDBVW</name>
<sequence>MVPPEEIASASNPDIEGENILHFLCREGDITDLMAFKNVISDANRHLALQFNRHGKQCVHIVSNPGIADPQEKLKLLMEWGADINGQERVFGNTPLHIAAYTQNHKLATWLCNQPGINMGIYNYLFKTPYYVACERHDLKIMNILRAKGTRCGVYRCRDAWLFTQKY</sequence>
<comment type="function">
    <text evidence="1">Suppresses the host immune response through NF-kappa-B inactivation. Possesses ankyrin repeat domains required for NF-kappa-B binding but lacks the regulatory regions required for dissociation from NF-kappa-B and degradation. Therefore, prevents host NF-kappa-B release and subsequent activation (By similarity).</text>
</comment>
<comment type="similarity">
    <text evidence="2">Belongs to the polydnaviridae I-Kappa-B-like protein family.</text>
</comment>
<protein>
    <recommendedName>
        <fullName>I-Kappa-B like protein F2</fullName>
    </recommendedName>
</protein>
<dbReference type="EMBL" id="AY875682">
    <property type="protein sequence ID" value="AAW51775.1"/>
    <property type="molecule type" value="Genomic_DNA"/>
</dbReference>
<dbReference type="RefSeq" id="YP_239373.1">
    <property type="nucleotide sequence ID" value="NC_007032.1"/>
</dbReference>
<dbReference type="SMR" id="Q5I155"/>
<dbReference type="KEGG" id="vg:5075808"/>
<dbReference type="Proteomes" id="UP000008168">
    <property type="component" value="Genome"/>
</dbReference>
<dbReference type="GO" id="GO:0051059">
    <property type="term" value="F:NF-kappaB binding"/>
    <property type="evidence" value="ECO:0007669"/>
    <property type="project" value="TreeGrafter"/>
</dbReference>
<dbReference type="GO" id="GO:0071356">
    <property type="term" value="P:cellular response to tumor necrosis factor"/>
    <property type="evidence" value="ECO:0007669"/>
    <property type="project" value="TreeGrafter"/>
</dbReference>
<dbReference type="GO" id="GO:0085034">
    <property type="term" value="P:symbiont-mediated suppression of host NF-kappaB cascade"/>
    <property type="evidence" value="ECO:0007669"/>
    <property type="project" value="UniProtKB-KW"/>
</dbReference>
<dbReference type="Gene3D" id="1.25.40.20">
    <property type="entry name" value="Ankyrin repeat-containing domain"/>
    <property type="match status" value="1"/>
</dbReference>
<dbReference type="InterPro" id="IPR002110">
    <property type="entry name" value="Ankyrin_rpt"/>
</dbReference>
<dbReference type="InterPro" id="IPR036770">
    <property type="entry name" value="Ankyrin_rpt-contain_sf"/>
</dbReference>
<dbReference type="InterPro" id="IPR051070">
    <property type="entry name" value="NF-kappa-B_inhibitor"/>
</dbReference>
<dbReference type="PANTHER" id="PTHR46680">
    <property type="entry name" value="NF-KAPPA-B INHIBITOR ALPHA"/>
    <property type="match status" value="1"/>
</dbReference>
<dbReference type="PANTHER" id="PTHR46680:SF3">
    <property type="entry name" value="NF-KAPPA-B INHIBITOR CACTUS"/>
    <property type="match status" value="1"/>
</dbReference>
<dbReference type="Pfam" id="PF12796">
    <property type="entry name" value="Ank_2"/>
    <property type="match status" value="1"/>
</dbReference>
<dbReference type="SUPFAM" id="SSF48403">
    <property type="entry name" value="Ankyrin repeat"/>
    <property type="match status" value="1"/>
</dbReference>
<dbReference type="PROSITE" id="PS50297">
    <property type="entry name" value="ANK_REP_REGION"/>
    <property type="match status" value="1"/>
</dbReference>
<keyword id="KW-0040">ANK repeat</keyword>
<keyword id="KW-0945">Host-virus interaction</keyword>
<keyword id="KW-1100">Inhibition of host NF-kappa-B by virus</keyword>
<keyword id="KW-1185">Reference proteome</keyword>
<keyword id="KW-0677">Repeat</keyword>
<reference key="1">
    <citation type="journal article" date="2006" name="Virology">
        <title>Polydnavirus genomes reflect their dual roles as mutualists and pathogens.</title>
        <authorList>
            <person name="Webb B.A."/>
            <person name="Strand M.R."/>
            <person name="Dickey S.E."/>
            <person name="Beck M.H."/>
            <person name="Hilgarth R.S."/>
            <person name="Barney W.E."/>
            <person name="Kadash K."/>
            <person name="Kroemer J.A."/>
            <person name="Lindstrom K.G."/>
            <person name="Rattanadechakul W."/>
            <person name="Shelby K.S."/>
            <person name="Thoetkiattikul H."/>
            <person name="Turnbull M.W."/>
            <person name="Witherell R.A."/>
        </authorList>
    </citation>
    <scope>NUCLEOTIDE SEQUENCE [GENOMIC DNA]</scope>
</reference>
<accession>Q5I155</accession>
<proteinExistence type="inferred from homology"/>
<organism>
    <name type="scientific">Microplitis demolitor bracovirus (isolate Webb)</name>
    <name type="common">MdBV</name>
    <dbReference type="NCBI Taxonomy" id="654919"/>
    <lineage>
        <taxon>Viruses</taxon>
        <taxon>Viruses incertae sedis</taxon>
        <taxon>Polydnaviriformidae</taxon>
        <taxon>Bracoviriform</taxon>
        <taxon>Microplitis demolitor bracovirus</taxon>
    </lineage>
</organism>
<gene>
    <name type="primary">F3</name>
</gene>
<organismHost>
    <name type="scientific">Microplitis demolitor</name>
    <name type="common">Parasitoid wasp</name>
    <dbReference type="NCBI Taxonomy" id="69319"/>
</organismHost>